<protein>
    <recommendedName>
        <fullName evidence="1">Light-independent protochlorophyllide reductase subunit B</fullName>
        <shortName evidence="1">DPOR subunit B</shortName>
        <shortName evidence="1">LI-POR subunit B</shortName>
        <ecNumber evidence="1">1.3.7.7</ecNumber>
    </recommendedName>
</protein>
<name>BCHB_RHOPB</name>
<keyword id="KW-0004">4Fe-4S</keyword>
<keyword id="KW-0067">ATP-binding</keyword>
<keyword id="KW-0077">Bacteriochlorophyll biosynthesis</keyword>
<keyword id="KW-0149">Chlorophyll biosynthesis</keyword>
<keyword id="KW-0408">Iron</keyword>
<keyword id="KW-0411">Iron-sulfur</keyword>
<keyword id="KW-0479">Metal-binding</keyword>
<keyword id="KW-0547">Nucleotide-binding</keyword>
<keyword id="KW-0560">Oxidoreductase</keyword>
<keyword id="KW-0602">Photosynthesis</keyword>
<reference key="1">
    <citation type="submission" date="2006-03" db="EMBL/GenBank/DDBJ databases">
        <title>Complete sequence of Rhodopseudomonas palustris BisB18.</title>
        <authorList>
            <consortium name="US DOE Joint Genome Institute"/>
            <person name="Copeland A."/>
            <person name="Lucas S."/>
            <person name="Lapidus A."/>
            <person name="Barry K."/>
            <person name="Detter J.C."/>
            <person name="Glavina del Rio T."/>
            <person name="Hammon N."/>
            <person name="Israni S."/>
            <person name="Dalin E."/>
            <person name="Tice H."/>
            <person name="Pitluck S."/>
            <person name="Chain P."/>
            <person name="Malfatti S."/>
            <person name="Shin M."/>
            <person name="Vergez L."/>
            <person name="Schmutz J."/>
            <person name="Larimer F."/>
            <person name="Land M."/>
            <person name="Hauser L."/>
            <person name="Pelletier D.A."/>
            <person name="Kyrpides N."/>
            <person name="Anderson I."/>
            <person name="Oda Y."/>
            <person name="Harwood C.S."/>
            <person name="Richardson P."/>
        </authorList>
    </citation>
    <scope>NUCLEOTIDE SEQUENCE [LARGE SCALE GENOMIC DNA]</scope>
    <source>
        <strain>BisB18</strain>
    </source>
</reference>
<sequence length="530" mass="57714">MQLTVWTYEGPPHVGAMRVATGMEGLHYVLHAPQGDTYADLLFTMIERRDRRPPVTYTTFAARDLGGDTAELFKTAVQNAYERFRPQAMIVGASCTGSLIQDDPGGLAKGMGLPVPVIAIDLPAYQRKENWGAAETFYQLVRALAGPSAPPPGSKRPERAPGVRPKCNILGPTALGFRHRDDVIEITALLGKLGIDVNVTAPMGATPADLTRLGEADFNVVLYPEIASQAASWLHRIFHQPFTKTIPIGVSATREFIEEVAALAGVDAAPVLKANSSRLTWFSHSVDSTYLTGKRVFIFGDATHVVAAARIASDEIGFKVVGIGTYSREFGREIREAAKLYDVEPLITDDYLEVEAHIAELQVELVLGTQMERHISKRLGVPCAVISAPVHIQDYPARYAPQMGFEGANVIFDTWVHPLMMGLEEHLLAMFKDDFEFKDGAVPSHLGVGHSAPAVQTASSEPQPSAIETPSAAATETAAVWAADAEKELRKIPFFVRGKARRNTERFANENGVATITVETLYDAKAHFSR</sequence>
<proteinExistence type="inferred from homology"/>
<organism>
    <name type="scientific">Rhodopseudomonas palustris (strain BisB18)</name>
    <dbReference type="NCBI Taxonomy" id="316056"/>
    <lineage>
        <taxon>Bacteria</taxon>
        <taxon>Pseudomonadati</taxon>
        <taxon>Pseudomonadota</taxon>
        <taxon>Alphaproteobacteria</taxon>
        <taxon>Hyphomicrobiales</taxon>
        <taxon>Nitrobacteraceae</taxon>
        <taxon>Rhodopseudomonas</taxon>
    </lineage>
</organism>
<accession>Q219R0</accession>
<comment type="function">
    <text evidence="1">Component of the dark-operative protochlorophyllide reductase (DPOR) that uses Mg-ATP and reduced ferredoxin to reduce ring D of protochlorophyllide (Pchlide) to form chlorophyllide a (Chlide). This reaction is light-independent. The NB-protein (BchN-BchB) is the catalytic component of the complex.</text>
</comment>
<comment type="catalytic activity">
    <reaction evidence="1">
        <text>chlorophyllide a + oxidized 2[4Fe-4S]-[ferredoxin] + 2 ADP + 2 phosphate = protochlorophyllide a + reduced 2[4Fe-4S]-[ferredoxin] + 2 ATP + 2 H2O</text>
        <dbReference type="Rhea" id="RHEA:28202"/>
        <dbReference type="Rhea" id="RHEA-COMP:10002"/>
        <dbReference type="Rhea" id="RHEA-COMP:10004"/>
        <dbReference type="ChEBI" id="CHEBI:15377"/>
        <dbReference type="ChEBI" id="CHEBI:30616"/>
        <dbReference type="ChEBI" id="CHEBI:33722"/>
        <dbReference type="ChEBI" id="CHEBI:33723"/>
        <dbReference type="ChEBI" id="CHEBI:43474"/>
        <dbReference type="ChEBI" id="CHEBI:83348"/>
        <dbReference type="ChEBI" id="CHEBI:83350"/>
        <dbReference type="ChEBI" id="CHEBI:456216"/>
        <dbReference type="EC" id="1.3.7.7"/>
    </reaction>
</comment>
<comment type="cofactor">
    <cofactor evidence="1">
        <name>[4Fe-4S] cluster</name>
        <dbReference type="ChEBI" id="CHEBI:49883"/>
    </cofactor>
    <text evidence="1">Binds 1 [4Fe-4S] cluster per heterodimer. The cluster is bound at the heterodimer interface by residues from both subunits.</text>
</comment>
<comment type="pathway">
    <text evidence="1">Porphyrin-containing compound metabolism; bacteriochlorophyll biosynthesis (light-independent).</text>
</comment>
<comment type="subunit">
    <text evidence="1">Protochlorophyllide reductase is composed of three subunits; BchL, BchN and BchB. Forms a heterotetramer of two BchB and two BchN subunits.</text>
</comment>
<comment type="similarity">
    <text evidence="1">Belongs to the ChlB/BchB/BchZ family.</text>
</comment>
<gene>
    <name evidence="1" type="primary">bchB</name>
    <name type="ordered locus">RPC_1314</name>
</gene>
<dbReference type="EC" id="1.3.7.7" evidence="1"/>
<dbReference type="EMBL" id="CP000301">
    <property type="protein sequence ID" value="ABD86876.1"/>
    <property type="molecule type" value="Genomic_DNA"/>
</dbReference>
<dbReference type="SMR" id="Q219R0"/>
<dbReference type="STRING" id="316056.RPC_1314"/>
<dbReference type="KEGG" id="rpc:RPC_1314"/>
<dbReference type="eggNOG" id="COG2710">
    <property type="taxonomic scope" value="Bacteria"/>
</dbReference>
<dbReference type="HOGENOM" id="CLU_025470_0_0_5"/>
<dbReference type="OrthoDB" id="5717231at2"/>
<dbReference type="UniPathway" id="UPA00671"/>
<dbReference type="GO" id="GO:0051539">
    <property type="term" value="F:4 iron, 4 sulfur cluster binding"/>
    <property type="evidence" value="ECO:0007669"/>
    <property type="project" value="UniProtKB-UniRule"/>
</dbReference>
<dbReference type="GO" id="GO:0005524">
    <property type="term" value="F:ATP binding"/>
    <property type="evidence" value="ECO:0007669"/>
    <property type="project" value="UniProtKB-UniRule"/>
</dbReference>
<dbReference type="GO" id="GO:0046872">
    <property type="term" value="F:metal ion binding"/>
    <property type="evidence" value="ECO:0007669"/>
    <property type="project" value="UniProtKB-KW"/>
</dbReference>
<dbReference type="GO" id="GO:0016730">
    <property type="term" value="F:oxidoreductase activity, acting on iron-sulfur proteins as donors"/>
    <property type="evidence" value="ECO:0007669"/>
    <property type="project" value="InterPro"/>
</dbReference>
<dbReference type="GO" id="GO:0016636">
    <property type="term" value="F:oxidoreductase activity, acting on the CH-CH group of donors, iron-sulfur protein as acceptor"/>
    <property type="evidence" value="ECO:0007669"/>
    <property type="project" value="UniProtKB-UniRule"/>
</dbReference>
<dbReference type="GO" id="GO:0036070">
    <property type="term" value="P:light-independent bacteriochlorophyll biosynthetic process"/>
    <property type="evidence" value="ECO:0007669"/>
    <property type="project" value="UniProtKB-UniRule"/>
</dbReference>
<dbReference type="GO" id="GO:0019685">
    <property type="term" value="P:photosynthesis, dark reaction"/>
    <property type="evidence" value="ECO:0007669"/>
    <property type="project" value="InterPro"/>
</dbReference>
<dbReference type="Gene3D" id="1.20.89.20">
    <property type="match status" value="1"/>
</dbReference>
<dbReference type="Gene3D" id="3.40.50.1980">
    <property type="entry name" value="Nitrogenase molybdenum iron protein domain"/>
    <property type="match status" value="3"/>
</dbReference>
<dbReference type="Gene3D" id="1.10.8.550">
    <property type="entry name" value="Proto-chlorophyllide reductase 57 kD subunit B"/>
    <property type="match status" value="1"/>
</dbReference>
<dbReference type="HAMAP" id="MF_00353">
    <property type="entry name" value="ChlB_BchB"/>
    <property type="match status" value="1"/>
</dbReference>
<dbReference type="InterPro" id="IPR050152">
    <property type="entry name" value="ChlB/BchB/BchZ"/>
</dbReference>
<dbReference type="InterPro" id="IPR013580">
    <property type="entry name" value="LI-POR_suB-like_C"/>
</dbReference>
<dbReference type="InterPro" id="IPR000510">
    <property type="entry name" value="Nase/OxRdtase_comp1"/>
</dbReference>
<dbReference type="InterPro" id="IPR042298">
    <property type="entry name" value="P-CP_red_C"/>
</dbReference>
<dbReference type="InterPro" id="IPR005969">
    <property type="entry name" value="Protochl_reductB"/>
</dbReference>
<dbReference type="InterPro" id="IPR016209">
    <property type="entry name" value="Protochlorophyllide_Rdtase"/>
</dbReference>
<dbReference type="NCBIfam" id="TIGR01278">
    <property type="entry name" value="DPOR_BchB"/>
    <property type="match status" value="1"/>
</dbReference>
<dbReference type="PANTHER" id="PTHR33712">
    <property type="entry name" value="LIGHT-INDEPENDENT PROTOCHLOROPHYLLIDE REDUCTASE SUBUNIT B"/>
    <property type="match status" value="1"/>
</dbReference>
<dbReference type="PANTHER" id="PTHR33712:SF7">
    <property type="entry name" value="LIGHT-INDEPENDENT PROTOCHLOROPHYLLIDE REDUCTASE SUBUNIT B"/>
    <property type="match status" value="1"/>
</dbReference>
<dbReference type="Pfam" id="PF00148">
    <property type="entry name" value="Oxidored_nitro"/>
    <property type="match status" value="1"/>
</dbReference>
<dbReference type="Pfam" id="PF08369">
    <property type="entry name" value="PCP_red"/>
    <property type="match status" value="1"/>
</dbReference>
<dbReference type="PIRSF" id="PIRSF000163">
    <property type="entry name" value="PCP_ChlB"/>
    <property type="match status" value="1"/>
</dbReference>
<dbReference type="SUPFAM" id="SSF53807">
    <property type="entry name" value="Helical backbone' metal receptor"/>
    <property type="match status" value="1"/>
</dbReference>
<evidence type="ECO:0000255" key="1">
    <source>
        <dbReference type="HAMAP-Rule" id="MF_00353"/>
    </source>
</evidence>
<evidence type="ECO:0000256" key="2">
    <source>
        <dbReference type="SAM" id="MobiDB-lite"/>
    </source>
</evidence>
<feature type="chain" id="PRO_1000048419" description="Light-independent protochlorophyllide reductase subunit B">
    <location>
        <begin position="1"/>
        <end position="530"/>
    </location>
</feature>
<feature type="region of interest" description="Disordered" evidence="2">
    <location>
        <begin position="453"/>
        <end position="472"/>
    </location>
</feature>
<feature type="compositionally biased region" description="Polar residues" evidence="2">
    <location>
        <begin position="454"/>
        <end position="463"/>
    </location>
</feature>
<feature type="active site" description="Proton donor" evidence="1">
    <location>
        <position position="287"/>
    </location>
</feature>
<feature type="binding site" evidence="1">
    <location>
        <position position="36"/>
    </location>
    <ligand>
        <name>[4Fe-4S] cluster</name>
        <dbReference type="ChEBI" id="CHEBI:49883"/>
        <note>ligand shared with heterodimeric partner</note>
    </ligand>
</feature>
<feature type="binding site" evidence="1">
    <location>
        <begin position="422"/>
        <end position="423"/>
    </location>
    <ligand>
        <name>substrate</name>
    </ligand>
</feature>